<sequence length="728" mass="84363">MSDRIDRDVINALIAGHFADPFSVLGMHKTTAGLEVRALLPDATDVWVIEPKTGRKLAKLECLDSRGFFSGVIPRRKNFFRYQLAVVWHGQQNLIDDPYRFGPLIQEMDAWLLSEGTHLRPYETLGAHADTMDGVTGTRFSVWAPNARRVSVVGQFNYWDGRRHPMRLRKESGIWELFIPGAHNGQLYKYEMIDANGNLRLKSDPYAFEAQMRPETASLICGLPEKVVQTEERKKANQFDAPISIYEVHLGSWRRHTDNNFWLSYRELADQLVPYAKWMGFTHLELLPINEHPFDGSWGYQPTGLYAPTRRFGTRDDFRYFIDAAHAAGLNVILDWVPGHFPTDDFALAEFDGTNLYEHSDPREGYHQDWNTLIYNYGRREVSNFLVGNALYWIERFGIDALRVDAVASMIYRDYSRKEGEWIPNEFGGRENLEAIEFLRNTNRILGEQVSGAVTMAEESTDFPGVSRPQDMGGLGFWYKWNLGWMHDTLDYMKLDPIYRQYHHDKLTFGMLYNYTENFVLPLSHDEVVHGKKSILDRMPGDAWQKFANLRAYYGWMWAFPGKKLLFMGNEFAQGREWNHDASLDWHLLEGGDNWHHGVQRLVRDLNHTYRHHKAMHELDFDPYGFEWLVVDDKERSVLIFVRRDKEGNEIIVASNFTPVPRHDYRFGINQPGKWREILNTDSMHYHGSNAGNGGAVHSDEIASHGRQHSLSLTLPPLATIWLVREAE</sequence>
<reference key="1">
    <citation type="journal article" date="2007" name="J. Bacteriol.">
        <title>The genome sequence of avian pathogenic Escherichia coli strain O1:K1:H7 shares strong similarities with human extraintestinal pathogenic E. coli genomes.</title>
        <authorList>
            <person name="Johnson T.J."/>
            <person name="Kariyawasam S."/>
            <person name="Wannemuehler Y."/>
            <person name="Mangiamele P."/>
            <person name="Johnson S.J."/>
            <person name="Doetkott C."/>
            <person name="Skyberg J.A."/>
            <person name="Lynne A.M."/>
            <person name="Johnson J.R."/>
            <person name="Nolan L.K."/>
        </authorList>
    </citation>
    <scope>NUCLEOTIDE SEQUENCE [LARGE SCALE GENOMIC DNA]</scope>
</reference>
<gene>
    <name evidence="1" type="primary">glgB</name>
    <name type="ordered locus">Ecok1_34110</name>
    <name type="ORF">APECO1_3025</name>
</gene>
<comment type="function">
    <text evidence="1">Catalyzes the formation of the alpha-1,6-glucosidic linkages in glycogen by scission of a 1,4-alpha-linked oligosaccharide from growing alpha-1,4-glucan chains and the subsequent attachment of the oligosaccharide to the alpha-1,6 position.</text>
</comment>
<comment type="catalytic activity">
    <reaction evidence="1">
        <text>Transfers a segment of a (1-&gt;4)-alpha-D-glucan chain to a primary hydroxy group in a similar glucan chain.</text>
        <dbReference type="EC" id="2.4.1.18"/>
    </reaction>
</comment>
<comment type="pathway">
    <text evidence="1">Glycan biosynthesis; glycogen biosynthesis.</text>
</comment>
<comment type="subunit">
    <text evidence="1">Monomer.</text>
</comment>
<comment type="similarity">
    <text evidence="1">Belongs to the glycosyl hydrolase 13 family. GlgB subfamily.</text>
</comment>
<dbReference type="EC" id="2.4.1.18" evidence="1"/>
<dbReference type="EMBL" id="CP000468">
    <property type="protein sequence ID" value="ABJ02905.1"/>
    <property type="molecule type" value="Genomic_DNA"/>
</dbReference>
<dbReference type="RefSeq" id="WP_001283713.1">
    <property type="nucleotide sequence ID" value="NZ_CADILS010000075.1"/>
</dbReference>
<dbReference type="SMR" id="A1AGW5"/>
<dbReference type="CAZy" id="CBM48">
    <property type="family name" value="Carbohydrate-Binding Module Family 48"/>
</dbReference>
<dbReference type="CAZy" id="GH13">
    <property type="family name" value="Glycoside Hydrolase Family 13"/>
</dbReference>
<dbReference type="KEGG" id="ecv:APECO1_3025"/>
<dbReference type="HOGENOM" id="CLU_004245_3_2_6"/>
<dbReference type="UniPathway" id="UPA00164"/>
<dbReference type="Proteomes" id="UP000008216">
    <property type="component" value="Chromosome"/>
</dbReference>
<dbReference type="GO" id="GO:0005829">
    <property type="term" value="C:cytosol"/>
    <property type="evidence" value="ECO:0007669"/>
    <property type="project" value="TreeGrafter"/>
</dbReference>
<dbReference type="GO" id="GO:0003844">
    <property type="term" value="F:1,4-alpha-glucan branching enzyme activity"/>
    <property type="evidence" value="ECO:0007669"/>
    <property type="project" value="UniProtKB-UniRule"/>
</dbReference>
<dbReference type="GO" id="GO:0043169">
    <property type="term" value="F:cation binding"/>
    <property type="evidence" value="ECO:0007669"/>
    <property type="project" value="InterPro"/>
</dbReference>
<dbReference type="GO" id="GO:0004553">
    <property type="term" value="F:hydrolase activity, hydrolyzing O-glycosyl compounds"/>
    <property type="evidence" value="ECO:0007669"/>
    <property type="project" value="InterPro"/>
</dbReference>
<dbReference type="GO" id="GO:0005978">
    <property type="term" value="P:glycogen biosynthetic process"/>
    <property type="evidence" value="ECO:0007669"/>
    <property type="project" value="UniProtKB-UniRule"/>
</dbReference>
<dbReference type="CDD" id="cd11322">
    <property type="entry name" value="AmyAc_Glg_BE"/>
    <property type="match status" value="1"/>
</dbReference>
<dbReference type="CDD" id="cd02855">
    <property type="entry name" value="E_set_GBE_prok_N"/>
    <property type="match status" value="1"/>
</dbReference>
<dbReference type="FunFam" id="2.60.40.10:FF:000169">
    <property type="entry name" value="1,4-alpha-glucan branching enzyme GlgB"/>
    <property type="match status" value="1"/>
</dbReference>
<dbReference type="FunFam" id="2.60.40.10:FF:000331">
    <property type="entry name" value="1,4-alpha-glucan branching enzyme GlgB"/>
    <property type="match status" value="1"/>
</dbReference>
<dbReference type="FunFam" id="2.60.40.1180:FF:000002">
    <property type="entry name" value="1,4-alpha-glucan branching enzyme GlgB"/>
    <property type="match status" value="1"/>
</dbReference>
<dbReference type="FunFam" id="3.20.20.80:FF:000003">
    <property type="entry name" value="1,4-alpha-glucan branching enzyme GlgB"/>
    <property type="match status" value="1"/>
</dbReference>
<dbReference type="Gene3D" id="3.20.20.80">
    <property type="entry name" value="Glycosidases"/>
    <property type="match status" value="1"/>
</dbReference>
<dbReference type="Gene3D" id="2.60.40.1180">
    <property type="entry name" value="Golgi alpha-mannosidase II"/>
    <property type="match status" value="1"/>
</dbReference>
<dbReference type="Gene3D" id="2.60.40.10">
    <property type="entry name" value="Immunoglobulins"/>
    <property type="match status" value="2"/>
</dbReference>
<dbReference type="HAMAP" id="MF_00685">
    <property type="entry name" value="GlgB"/>
    <property type="match status" value="1"/>
</dbReference>
<dbReference type="InterPro" id="IPR006048">
    <property type="entry name" value="A-amylase/branching_C"/>
</dbReference>
<dbReference type="InterPro" id="IPR037439">
    <property type="entry name" value="Branching_enzy"/>
</dbReference>
<dbReference type="InterPro" id="IPR006407">
    <property type="entry name" value="GlgB"/>
</dbReference>
<dbReference type="InterPro" id="IPR054169">
    <property type="entry name" value="GlgB_N"/>
</dbReference>
<dbReference type="InterPro" id="IPR044143">
    <property type="entry name" value="GlgB_N_E_set_prok"/>
</dbReference>
<dbReference type="InterPro" id="IPR006047">
    <property type="entry name" value="Glyco_hydro_13_cat_dom"/>
</dbReference>
<dbReference type="InterPro" id="IPR004193">
    <property type="entry name" value="Glyco_hydro_13_N"/>
</dbReference>
<dbReference type="InterPro" id="IPR013780">
    <property type="entry name" value="Glyco_hydro_b"/>
</dbReference>
<dbReference type="InterPro" id="IPR017853">
    <property type="entry name" value="Glycoside_hydrolase_SF"/>
</dbReference>
<dbReference type="InterPro" id="IPR013783">
    <property type="entry name" value="Ig-like_fold"/>
</dbReference>
<dbReference type="InterPro" id="IPR014756">
    <property type="entry name" value="Ig_E-set"/>
</dbReference>
<dbReference type="NCBIfam" id="TIGR01515">
    <property type="entry name" value="branching_enzym"/>
    <property type="match status" value="1"/>
</dbReference>
<dbReference type="NCBIfam" id="NF003811">
    <property type="entry name" value="PRK05402.1"/>
    <property type="match status" value="1"/>
</dbReference>
<dbReference type="NCBIfam" id="NF008967">
    <property type="entry name" value="PRK12313.1"/>
    <property type="match status" value="1"/>
</dbReference>
<dbReference type="PANTHER" id="PTHR43651">
    <property type="entry name" value="1,4-ALPHA-GLUCAN-BRANCHING ENZYME"/>
    <property type="match status" value="1"/>
</dbReference>
<dbReference type="PANTHER" id="PTHR43651:SF3">
    <property type="entry name" value="1,4-ALPHA-GLUCAN-BRANCHING ENZYME"/>
    <property type="match status" value="1"/>
</dbReference>
<dbReference type="Pfam" id="PF00128">
    <property type="entry name" value="Alpha-amylase"/>
    <property type="match status" value="1"/>
</dbReference>
<dbReference type="Pfam" id="PF02806">
    <property type="entry name" value="Alpha-amylase_C"/>
    <property type="match status" value="1"/>
</dbReference>
<dbReference type="Pfam" id="PF02922">
    <property type="entry name" value="CBM_48"/>
    <property type="match status" value="1"/>
</dbReference>
<dbReference type="Pfam" id="PF22019">
    <property type="entry name" value="GlgB_N"/>
    <property type="match status" value="1"/>
</dbReference>
<dbReference type="PIRSF" id="PIRSF000463">
    <property type="entry name" value="GlgB"/>
    <property type="match status" value="1"/>
</dbReference>
<dbReference type="SMART" id="SM00642">
    <property type="entry name" value="Aamy"/>
    <property type="match status" value="1"/>
</dbReference>
<dbReference type="SUPFAM" id="SSF51445">
    <property type="entry name" value="(Trans)glycosidases"/>
    <property type="match status" value="1"/>
</dbReference>
<dbReference type="SUPFAM" id="SSF81296">
    <property type="entry name" value="E set domains"/>
    <property type="match status" value="2"/>
</dbReference>
<dbReference type="SUPFAM" id="SSF51011">
    <property type="entry name" value="Glycosyl hydrolase domain"/>
    <property type="match status" value="1"/>
</dbReference>
<protein>
    <recommendedName>
        <fullName evidence="1">1,4-alpha-glucan branching enzyme GlgB</fullName>
        <ecNumber evidence="1">2.4.1.18</ecNumber>
    </recommendedName>
    <alternativeName>
        <fullName evidence="1">1,4-alpha-D-glucan:1,4-alpha-D-glucan 6-glucosyl-transferase</fullName>
    </alternativeName>
    <alternativeName>
        <fullName evidence="1">Alpha-(1-&gt;4)-glucan branching enzyme</fullName>
    </alternativeName>
    <alternativeName>
        <fullName evidence="1">Glycogen branching enzyme</fullName>
        <shortName evidence="1">BE</shortName>
    </alternativeName>
</protein>
<proteinExistence type="inferred from homology"/>
<keyword id="KW-0119">Carbohydrate metabolism</keyword>
<keyword id="KW-0320">Glycogen biosynthesis</keyword>
<keyword id="KW-0321">Glycogen metabolism</keyword>
<keyword id="KW-0328">Glycosyltransferase</keyword>
<keyword id="KW-1185">Reference proteome</keyword>
<keyword id="KW-0808">Transferase</keyword>
<organism>
    <name type="scientific">Escherichia coli O1:K1 / APEC</name>
    <dbReference type="NCBI Taxonomy" id="405955"/>
    <lineage>
        <taxon>Bacteria</taxon>
        <taxon>Pseudomonadati</taxon>
        <taxon>Pseudomonadota</taxon>
        <taxon>Gammaproteobacteria</taxon>
        <taxon>Enterobacterales</taxon>
        <taxon>Enterobacteriaceae</taxon>
        <taxon>Escherichia</taxon>
    </lineage>
</organism>
<name>GLGB_ECOK1</name>
<feature type="chain" id="PRO_1000044976" description="1,4-alpha-glucan branching enzyme GlgB">
    <location>
        <begin position="1"/>
        <end position="728"/>
    </location>
</feature>
<feature type="active site" description="Nucleophile" evidence="1">
    <location>
        <position position="405"/>
    </location>
</feature>
<feature type="active site" description="Proton donor" evidence="1">
    <location>
        <position position="458"/>
    </location>
</feature>
<evidence type="ECO:0000255" key="1">
    <source>
        <dbReference type="HAMAP-Rule" id="MF_00685"/>
    </source>
</evidence>
<accession>A1AGW5</accession>